<proteinExistence type="inferred from homology"/>
<keyword id="KW-0106">Calcium</keyword>
<keyword id="KW-0186">Copper</keyword>
<keyword id="KW-0249">Electron transport</keyword>
<keyword id="KW-0349">Heme</keyword>
<keyword id="KW-0408">Iron</keyword>
<keyword id="KW-0472">Membrane</keyword>
<keyword id="KW-0479">Metal-binding</keyword>
<keyword id="KW-0496">Mitochondrion</keyword>
<keyword id="KW-0999">Mitochondrion inner membrane</keyword>
<keyword id="KW-0679">Respiratory chain</keyword>
<keyword id="KW-1278">Translocase</keyword>
<keyword id="KW-0812">Transmembrane</keyword>
<keyword id="KW-1133">Transmembrane helix</keyword>
<keyword id="KW-0813">Transport</keyword>
<organism>
    <name type="scientific">Strigomonas oncopelti</name>
    <name type="common">Parasitic flagellate</name>
    <name type="synonym">Crithidia oncopelti</name>
    <dbReference type="NCBI Taxonomy" id="5657"/>
    <lineage>
        <taxon>Eukaryota</taxon>
        <taxon>Discoba</taxon>
        <taxon>Euglenozoa</taxon>
        <taxon>Kinetoplastea</taxon>
        <taxon>Metakinetoplastina</taxon>
        <taxon>Trypanosomatida</taxon>
        <taxon>Trypanosomatidae</taxon>
        <taxon>Strigomonadinae</taxon>
        <taxon>Strigomonas</taxon>
    </lineage>
</organism>
<accession>P98003</accession>
<sequence>MFWISLVCLSVSHKMIGMCYLLVAILCGFLGYIYSLFIRLELSIIGCGVLFGDYQYYNVLVTTHGLVMVFAFIMPVMMGGLVNYFVPVLSGFPDMVFPRLNNMSFWMFMGGFGALVSGLLTEEGMGIGWTMYPTLICVDFHSSLACDFTVFAVHLLGVSSILNSINLLGTLFCCRRKFFSFLNWTLFIWGSLITALLLIITLPVLAGGVTLVLCDRNFNTSFYDVVGGGDLLLFQHLFWFFGHPEVYIIIIPVFGLISTMVEVLGFRCVFSSVAMIYSMILIAILGFFVWAHHMFVVGMDVDTRAYFGSVTVLIGLPTCIKLFNWTYSFLYTDFIIAFEA</sequence>
<dbReference type="EC" id="7.1.1.9"/>
<dbReference type="EMBL" id="X56015">
    <property type="protein sequence ID" value="CAA39490.1"/>
    <property type="molecule type" value="Genomic_DNA"/>
</dbReference>
<dbReference type="PIR" id="S34958">
    <property type="entry name" value="S34958"/>
</dbReference>
<dbReference type="SMR" id="P98003"/>
<dbReference type="UniPathway" id="UPA00705"/>
<dbReference type="GO" id="GO:0005743">
    <property type="term" value="C:mitochondrial inner membrane"/>
    <property type="evidence" value="ECO:0007669"/>
    <property type="project" value="UniProtKB-SubCell"/>
</dbReference>
<dbReference type="GO" id="GO:0004129">
    <property type="term" value="F:cytochrome-c oxidase activity"/>
    <property type="evidence" value="ECO:0007669"/>
    <property type="project" value="UniProtKB-EC"/>
</dbReference>
<dbReference type="GO" id="GO:0020037">
    <property type="term" value="F:heme binding"/>
    <property type="evidence" value="ECO:0007669"/>
    <property type="project" value="InterPro"/>
</dbReference>
<dbReference type="GO" id="GO:0046872">
    <property type="term" value="F:metal ion binding"/>
    <property type="evidence" value="ECO:0007669"/>
    <property type="project" value="UniProtKB-KW"/>
</dbReference>
<dbReference type="GO" id="GO:0015990">
    <property type="term" value="P:electron transport coupled proton transport"/>
    <property type="evidence" value="ECO:0007669"/>
    <property type="project" value="TreeGrafter"/>
</dbReference>
<dbReference type="GO" id="GO:0006123">
    <property type="term" value="P:mitochondrial electron transport, cytochrome c to oxygen"/>
    <property type="evidence" value="ECO:0007669"/>
    <property type="project" value="TreeGrafter"/>
</dbReference>
<dbReference type="Gene3D" id="1.20.210.10">
    <property type="entry name" value="Cytochrome c oxidase-like, subunit I domain"/>
    <property type="match status" value="1"/>
</dbReference>
<dbReference type="InterPro" id="IPR023616">
    <property type="entry name" value="Cyt_c_oxase-like_su1_dom"/>
</dbReference>
<dbReference type="InterPro" id="IPR036927">
    <property type="entry name" value="Cyt_c_oxase-like_su1_sf"/>
</dbReference>
<dbReference type="InterPro" id="IPR000883">
    <property type="entry name" value="Cyt_C_Oxase_1"/>
</dbReference>
<dbReference type="InterPro" id="IPR023615">
    <property type="entry name" value="Cyt_c_Oxase_su1_BS"/>
</dbReference>
<dbReference type="PANTHER" id="PTHR10422">
    <property type="entry name" value="CYTOCHROME C OXIDASE SUBUNIT 1"/>
    <property type="match status" value="1"/>
</dbReference>
<dbReference type="PANTHER" id="PTHR10422:SF18">
    <property type="entry name" value="CYTOCHROME C OXIDASE SUBUNIT 1"/>
    <property type="match status" value="1"/>
</dbReference>
<dbReference type="Pfam" id="PF00115">
    <property type="entry name" value="COX1"/>
    <property type="match status" value="1"/>
</dbReference>
<dbReference type="PRINTS" id="PR01165">
    <property type="entry name" value="CYCOXIDASEI"/>
</dbReference>
<dbReference type="SUPFAM" id="SSF81442">
    <property type="entry name" value="Cytochrome c oxidase subunit I-like"/>
    <property type="match status" value="1"/>
</dbReference>
<dbReference type="PROSITE" id="PS50855">
    <property type="entry name" value="COX1"/>
    <property type="match status" value="1"/>
</dbReference>
<dbReference type="PROSITE" id="PS00077">
    <property type="entry name" value="COX1_CUB"/>
    <property type="match status" value="1"/>
</dbReference>
<comment type="function">
    <text evidence="2">Component of the cytochrome c oxidase, the last enzyme in the mitochondrial electron transport chain which drives oxidative phosphorylation. The respiratory chain contains 3 multisubunit complexes succinate dehydrogenase (complex II, CII), ubiquinol-cytochrome c oxidoreductase (cytochrome b-c1 complex, complex III, CIII) and cytochrome c oxidase (complex IV, CIV), that cooperate to transfer electrons derived from NADH and succinate to molecular oxygen, creating an electrochemical gradient over the inner membrane that drives transmembrane transport and the ATP synthase. Cytochrome c oxidase is the component of the respiratory chain that catalyzes the reduction of oxygen to water. Electrons originating from reduced cytochrome c in the intermembrane space (IMS) are transferred via the dinuclear copper A center (CU(A)) of subunit 2 and heme A of subunit 1 to the active site in subunit 1, a binuclear center (BNC) formed by heme A3 and copper B (CU(B)). The BNC reduces molecular oxygen to 2 water molecules using 4 electrons from cytochrome c in the IMS and 4 protons from the mitochondrial matrix.</text>
</comment>
<comment type="catalytic activity">
    <reaction evidence="2">
        <text>4 Fe(II)-[cytochrome c] + O2 + 8 H(+)(in) = 4 Fe(III)-[cytochrome c] + 2 H2O + 4 H(+)(out)</text>
        <dbReference type="Rhea" id="RHEA:11436"/>
        <dbReference type="Rhea" id="RHEA-COMP:10350"/>
        <dbReference type="Rhea" id="RHEA-COMP:14399"/>
        <dbReference type="ChEBI" id="CHEBI:15377"/>
        <dbReference type="ChEBI" id="CHEBI:15378"/>
        <dbReference type="ChEBI" id="CHEBI:15379"/>
        <dbReference type="ChEBI" id="CHEBI:29033"/>
        <dbReference type="ChEBI" id="CHEBI:29034"/>
        <dbReference type="EC" id="7.1.1.9"/>
    </reaction>
    <physiologicalReaction direction="left-to-right" evidence="2">
        <dbReference type="Rhea" id="RHEA:11437"/>
    </physiologicalReaction>
</comment>
<comment type="cofactor">
    <cofactor evidence="2">
        <name>heme</name>
        <dbReference type="ChEBI" id="CHEBI:30413"/>
    </cofactor>
    <text evidence="2">Binds 2 heme A groups non-covalently per subunit.</text>
</comment>
<comment type="cofactor">
    <cofactor evidence="2">
        <name>Cu cation</name>
        <dbReference type="ChEBI" id="CHEBI:23378"/>
    </cofactor>
    <text evidence="2">Binds a copper B center.</text>
</comment>
<comment type="pathway">
    <text evidence="2">Energy metabolism; oxidative phosphorylation.</text>
</comment>
<comment type="subunit">
    <text evidence="2">Component of the cytochrome c oxidase (complex IV, CIV), a multisubunit enzyme composed of a catalytic core of 3 subunits and several supernumerary subunits. The complex exists as a monomer or a dimer and forms supercomplexes (SCs) in the inner mitochondrial membrane with ubiquinol-cytochrome c oxidoreductase (cytochrome b-c1 complex, complex III, CIII).</text>
</comment>
<comment type="subcellular location">
    <subcellularLocation>
        <location evidence="2">Mitochondrion inner membrane</location>
        <topology evidence="2">Multi-pass membrane protein</topology>
    </subcellularLocation>
</comment>
<comment type="similarity">
    <text evidence="4">Belongs to the heme-copper respiratory oxidase family.</text>
</comment>
<reference key="1">
    <citation type="submission" date="1990-10" db="EMBL/GenBank/DDBJ databases">
        <authorList>
            <person name="Maslov D.A."/>
            <person name="Horvath A."/>
            <person name="Gwang K. II"/>
            <person name="Kolesnikov A.A."/>
        </authorList>
    </citation>
    <scope>NUCLEOTIDE SEQUENCE [GENOMIC DNA]</scope>
    <source>
        <strain>S-068</strain>
    </source>
</reference>
<feature type="chain" id="PRO_0000183317" description="Cytochrome c oxidase subunit 1">
    <location>
        <begin position="1"/>
        <end position="340" status="greater than"/>
    </location>
</feature>
<feature type="transmembrane region" description="Helical" evidence="3">
    <location>
        <begin position="18"/>
        <end position="38"/>
    </location>
</feature>
<feature type="transmembrane region" description="Helical" evidence="3">
    <location>
        <begin position="42"/>
        <end position="62"/>
    </location>
</feature>
<feature type="transmembrane region" description="Helical" evidence="3">
    <location>
        <begin position="66"/>
        <end position="86"/>
    </location>
</feature>
<feature type="transmembrane region" description="Helical" evidence="3">
    <location>
        <begin position="100"/>
        <end position="120"/>
    </location>
</feature>
<feature type="transmembrane region" description="Helical" evidence="3">
    <location>
        <begin position="148"/>
        <end position="168"/>
    </location>
</feature>
<feature type="transmembrane region" description="Helical" evidence="3">
    <location>
        <begin position="186"/>
        <end position="206"/>
    </location>
</feature>
<feature type="transmembrane region" description="Helical" evidence="3">
    <location>
        <begin position="237"/>
        <end position="257"/>
    </location>
</feature>
<feature type="transmembrane region" description="Helical" evidence="3">
    <location>
        <begin position="279"/>
        <end position="299"/>
    </location>
</feature>
<feature type="transmembrane region" description="Helical" evidence="3">
    <location>
        <begin position="305"/>
        <end position="325"/>
    </location>
</feature>
<feature type="binding site" evidence="2">
    <location>
        <position position="41"/>
    </location>
    <ligand>
        <name>Ca(2+)</name>
        <dbReference type="ChEBI" id="CHEBI:29108"/>
    </ligand>
</feature>
<feature type="binding site" evidence="2">
    <location>
        <position position="46"/>
    </location>
    <ligand>
        <name>Ca(2+)</name>
        <dbReference type="ChEBI" id="CHEBI:29108"/>
    </ligand>
</feature>
<feature type="binding site" description="axial binding residue" evidence="2">
    <location>
        <position position="64"/>
    </location>
    <ligand>
        <name>Fe(II)-heme a</name>
        <dbReference type="ChEBI" id="CHEBI:61715"/>
        <note>low-spin</note>
    </ligand>
    <ligandPart>
        <name>Fe</name>
        <dbReference type="ChEBI" id="CHEBI:18248"/>
    </ligandPart>
</feature>
<feature type="binding site" evidence="2">
    <location>
        <position position="243"/>
    </location>
    <ligand>
        <name>Cu cation</name>
        <dbReference type="ChEBI" id="CHEBI:23378"/>
        <label>B</label>
    </ligand>
</feature>
<feature type="binding site" evidence="1">
    <location>
        <position position="247"/>
    </location>
    <ligand>
        <name>O2</name>
        <dbReference type="ChEBI" id="CHEBI:15379"/>
    </ligand>
</feature>
<feature type="binding site" evidence="2">
    <location>
        <position position="292"/>
    </location>
    <ligand>
        <name>Cu cation</name>
        <dbReference type="ChEBI" id="CHEBI:23378"/>
        <label>B</label>
    </ligand>
</feature>
<feature type="binding site" evidence="2">
    <location>
        <position position="293"/>
    </location>
    <ligand>
        <name>Cu cation</name>
        <dbReference type="ChEBI" id="CHEBI:23378"/>
        <label>B</label>
    </ligand>
</feature>
<feature type="cross-link" description="1'-histidyl-3'-tyrosine (His-Tyr)" evidence="2">
    <location>
        <begin position="243"/>
        <end position="247"/>
    </location>
</feature>
<feature type="non-terminal residue">
    <location>
        <position position="340"/>
    </location>
</feature>
<name>COX1_STROO</name>
<protein>
    <recommendedName>
        <fullName>Cytochrome c oxidase subunit 1</fullName>
        <ecNumber>7.1.1.9</ecNumber>
    </recommendedName>
    <alternativeName>
        <fullName>Cytochrome c oxidase polypeptide I</fullName>
    </alternativeName>
</protein>
<evidence type="ECO:0000250" key="1">
    <source>
        <dbReference type="UniProtKB" id="P00396"/>
    </source>
</evidence>
<evidence type="ECO:0000250" key="2">
    <source>
        <dbReference type="UniProtKB" id="P00401"/>
    </source>
</evidence>
<evidence type="ECO:0000255" key="3"/>
<evidence type="ECO:0000305" key="4"/>
<gene>
    <name type="primary">COI</name>
</gene>
<geneLocation type="mitochondrion"/>